<keyword id="KW-0963">Cytoplasm</keyword>
<keyword id="KW-0378">Hydrolase</keyword>
<keyword id="KW-0694">RNA-binding</keyword>
<keyword id="KW-0820">tRNA-binding</keyword>
<feature type="chain" id="PRO_0000264065" description="Peptidyl-tRNA hydrolase">
    <location>
        <begin position="1"/>
        <end position="194"/>
    </location>
</feature>
<feature type="active site" description="Proton acceptor" evidence="1">
    <location>
        <position position="24"/>
    </location>
</feature>
<feature type="binding site" evidence="1">
    <location>
        <position position="19"/>
    </location>
    <ligand>
        <name>tRNA</name>
        <dbReference type="ChEBI" id="CHEBI:17843"/>
    </ligand>
</feature>
<feature type="binding site" evidence="1">
    <location>
        <position position="69"/>
    </location>
    <ligand>
        <name>tRNA</name>
        <dbReference type="ChEBI" id="CHEBI:17843"/>
    </ligand>
</feature>
<feature type="binding site" evidence="1">
    <location>
        <position position="71"/>
    </location>
    <ligand>
        <name>tRNA</name>
        <dbReference type="ChEBI" id="CHEBI:17843"/>
    </ligand>
</feature>
<feature type="binding site" evidence="1">
    <location>
        <position position="117"/>
    </location>
    <ligand>
        <name>tRNA</name>
        <dbReference type="ChEBI" id="CHEBI:17843"/>
    </ligand>
</feature>
<feature type="site" description="Discriminates between blocked and unblocked aminoacyl-tRNA" evidence="1">
    <location>
        <position position="14"/>
    </location>
</feature>
<feature type="site" description="Stabilizes the basic form of H active site to accept a proton" evidence="1">
    <location>
        <position position="96"/>
    </location>
</feature>
<reference key="1">
    <citation type="journal article" date="2006" name="PLoS Genet.">
        <title>Comparative genomics of emerging human ehrlichiosis agents.</title>
        <authorList>
            <person name="Dunning Hotopp J.C."/>
            <person name="Lin M."/>
            <person name="Madupu R."/>
            <person name="Crabtree J."/>
            <person name="Angiuoli S.V."/>
            <person name="Eisen J.A."/>
            <person name="Seshadri R."/>
            <person name="Ren Q."/>
            <person name="Wu M."/>
            <person name="Utterback T.R."/>
            <person name="Smith S."/>
            <person name="Lewis M."/>
            <person name="Khouri H."/>
            <person name="Zhang C."/>
            <person name="Niu H."/>
            <person name="Lin Q."/>
            <person name="Ohashi N."/>
            <person name="Zhi N."/>
            <person name="Nelson W.C."/>
            <person name="Brinkac L.M."/>
            <person name="Dodson R.J."/>
            <person name="Rosovitz M.J."/>
            <person name="Sundaram J.P."/>
            <person name="Daugherty S.C."/>
            <person name="Davidsen T."/>
            <person name="Durkin A.S."/>
            <person name="Gwinn M.L."/>
            <person name="Haft D.H."/>
            <person name="Selengut J.D."/>
            <person name="Sullivan S.A."/>
            <person name="Zafar N."/>
            <person name="Zhou L."/>
            <person name="Benahmed F."/>
            <person name="Forberger H."/>
            <person name="Halpin R."/>
            <person name="Mulligan S."/>
            <person name="Robinson J."/>
            <person name="White O."/>
            <person name="Rikihisa Y."/>
            <person name="Tettelin H."/>
        </authorList>
    </citation>
    <scope>NUCLEOTIDE SEQUENCE [LARGE SCALE GENOMIC DNA]</scope>
    <source>
        <strain>ATCC VR-367 / Miyayama</strain>
    </source>
</reference>
<evidence type="ECO:0000255" key="1">
    <source>
        <dbReference type="HAMAP-Rule" id="MF_00083"/>
    </source>
</evidence>
<dbReference type="EC" id="3.1.1.29" evidence="1"/>
<dbReference type="EMBL" id="CP000237">
    <property type="protein sequence ID" value="ABD46275.1"/>
    <property type="molecule type" value="Genomic_DNA"/>
</dbReference>
<dbReference type="RefSeq" id="WP_011451703.1">
    <property type="nucleotide sequence ID" value="NC_007798.1"/>
</dbReference>
<dbReference type="SMR" id="Q2GE99"/>
<dbReference type="STRING" id="222891.NSE_0307"/>
<dbReference type="KEGG" id="nse:NSE_0307"/>
<dbReference type="eggNOG" id="COG0193">
    <property type="taxonomic scope" value="Bacteria"/>
</dbReference>
<dbReference type="HOGENOM" id="CLU_062456_4_1_5"/>
<dbReference type="OrthoDB" id="9800507at2"/>
<dbReference type="Proteomes" id="UP000001942">
    <property type="component" value="Chromosome"/>
</dbReference>
<dbReference type="GO" id="GO:0005737">
    <property type="term" value="C:cytoplasm"/>
    <property type="evidence" value="ECO:0007669"/>
    <property type="project" value="UniProtKB-SubCell"/>
</dbReference>
<dbReference type="GO" id="GO:0004045">
    <property type="term" value="F:peptidyl-tRNA hydrolase activity"/>
    <property type="evidence" value="ECO:0007669"/>
    <property type="project" value="UniProtKB-UniRule"/>
</dbReference>
<dbReference type="GO" id="GO:0000049">
    <property type="term" value="F:tRNA binding"/>
    <property type="evidence" value="ECO:0007669"/>
    <property type="project" value="UniProtKB-UniRule"/>
</dbReference>
<dbReference type="GO" id="GO:0006515">
    <property type="term" value="P:protein quality control for misfolded or incompletely synthesized proteins"/>
    <property type="evidence" value="ECO:0007669"/>
    <property type="project" value="UniProtKB-UniRule"/>
</dbReference>
<dbReference type="GO" id="GO:0072344">
    <property type="term" value="P:rescue of stalled ribosome"/>
    <property type="evidence" value="ECO:0007669"/>
    <property type="project" value="UniProtKB-UniRule"/>
</dbReference>
<dbReference type="CDD" id="cd00462">
    <property type="entry name" value="PTH"/>
    <property type="match status" value="1"/>
</dbReference>
<dbReference type="Gene3D" id="3.40.50.1470">
    <property type="entry name" value="Peptidyl-tRNA hydrolase"/>
    <property type="match status" value="1"/>
</dbReference>
<dbReference type="HAMAP" id="MF_00083">
    <property type="entry name" value="Pept_tRNA_hydro_bact"/>
    <property type="match status" value="1"/>
</dbReference>
<dbReference type="InterPro" id="IPR001328">
    <property type="entry name" value="Pept_tRNA_hydro"/>
</dbReference>
<dbReference type="InterPro" id="IPR018171">
    <property type="entry name" value="Pept_tRNA_hydro_CS"/>
</dbReference>
<dbReference type="InterPro" id="IPR036416">
    <property type="entry name" value="Pept_tRNA_hydro_sf"/>
</dbReference>
<dbReference type="NCBIfam" id="TIGR00447">
    <property type="entry name" value="pth"/>
    <property type="match status" value="1"/>
</dbReference>
<dbReference type="PANTHER" id="PTHR17224">
    <property type="entry name" value="PEPTIDYL-TRNA HYDROLASE"/>
    <property type="match status" value="1"/>
</dbReference>
<dbReference type="PANTHER" id="PTHR17224:SF1">
    <property type="entry name" value="PEPTIDYL-TRNA HYDROLASE"/>
    <property type="match status" value="1"/>
</dbReference>
<dbReference type="Pfam" id="PF01195">
    <property type="entry name" value="Pept_tRNA_hydro"/>
    <property type="match status" value="1"/>
</dbReference>
<dbReference type="SUPFAM" id="SSF53178">
    <property type="entry name" value="Peptidyl-tRNA hydrolase-like"/>
    <property type="match status" value="1"/>
</dbReference>
<dbReference type="PROSITE" id="PS01195">
    <property type="entry name" value="PEPT_TRNA_HYDROL_1"/>
    <property type="match status" value="1"/>
</dbReference>
<dbReference type="PROSITE" id="PS01196">
    <property type="entry name" value="PEPT_TRNA_HYDROL_2"/>
    <property type="match status" value="1"/>
</dbReference>
<organism>
    <name type="scientific">Neorickettsia sennetsu (strain ATCC VR-367 / Miyayama)</name>
    <name type="common">Ehrlichia sennetsu</name>
    <dbReference type="NCBI Taxonomy" id="222891"/>
    <lineage>
        <taxon>Bacteria</taxon>
        <taxon>Pseudomonadati</taxon>
        <taxon>Pseudomonadota</taxon>
        <taxon>Alphaproteobacteria</taxon>
        <taxon>Rickettsiales</taxon>
        <taxon>Anaplasmataceae</taxon>
        <taxon>Neorickettsia</taxon>
    </lineage>
</organism>
<sequence length="194" mass="22098">MSEFRTFVLCGLGNPGLRYAQTRHNLGFMLIDYVRYTFSFPEFLPKFSGLLSSGRVSSFLLYLFKPVAFMNNSGRPLVQLVNFYKVELENVIVFHDDIDLDFAKVKIKRGGGSGGHNGLKSLDFNLGRDYWRFRFGVGRGVGDPAEHVLSRFTALELERLNKLFGFIGTNLPLLLSDIATRKEKFLNEYKCCSQ</sequence>
<name>PTH_NEOSM</name>
<accession>Q2GE99</accession>
<proteinExistence type="inferred from homology"/>
<protein>
    <recommendedName>
        <fullName evidence="1">Peptidyl-tRNA hydrolase</fullName>
        <shortName evidence="1">Pth</shortName>
        <ecNumber evidence="1">3.1.1.29</ecNumber>
    </recommendedName>
</protein>
<comment type="function">
    <text evidence="1">Hydrolyzes ribosome-free peptidyl-tRNAs (with 1 or more amino acids incorporated), which drop off the ribosome during protein synthesis, or as a result of ribosome stalling.</text>
</comment>
<comment type="function">
    <text evidence="1">Catalyzes the release of premature peptidyl moieties from peptidyl-tRNA molecules trapped in stalled 50S ribosomal subunits, and thus maintains levels of free tRNAs and 50S ribosomes.</text>
</comment>
<comment type="catalytic activity">
    <reaction evidence="1">
        <text>an N-acyl-L-alpha-aminoacyl-tRNA + H2O = an N-acyl-L-amino acid + a tRNA + H(+)</text>
        <dbReference type="Rhea" id="RHEA:54448"/>
        <dbReference type="Rhea" id="RHEA-COMP:10123"/>
        <dbReference type="Rhea" id="RHEA-COMP:13883"/>
        <dbReference type="ChEBI" id="CHEBI:15377"/>
        <dbReference type="ChEBI" id="CHEBI:15378"/>
        <dbReference type="ChEBI" id="CHEBI:59874"/>
        <dbReference type="ChEBI" id="CHEBI:78442"/>
        <dbReference type="ChEBI" id="CHEBI:138191"/>
        <dbReference type="EC" id="3.1.1.29"/>
    </reaction>
</comment>
<comment type="subunit">
    <text evidence="1">Monomer.</text>
</comment>
<comment type="subcellular location">
    <subcellularLocation>
        <location evidence="1">Cytoplasm</location>
    </subcellularLocation>
</comment>
<comment type="similarity">
    <text evidence="1">Belongs to the PTH family.</text>
</comment>
<gene>
    <name evidence="1" type="primary">pth</name>
    <name type="ordered locus">NSE_0307</name>
</gene>